<feature type="chain" id="PRO_1000054936" description="Small ribosomal subunit protein uS17">
    <location>
        <begin position="1"/>
        <end position="83"/>
    </location>
</feature>
<keyword id="KW-0687">Ribonucleoprotein</keyword>
<keyword id="KW-0689">Ribosomal protein</keyword>
<keyword id="KW-0694">RNA-binding</keyword>
<keyword id="KW-0699">rRNA-binding</keyword>
<evidence type="ECO:0000255" key="1">
    <source>
        <dbReference type="HAMAP-Rule" id="MF_01345"/>
    </source>
</evidence>
<evidence type="ECO:0000305" key="2"/>
<sequence length="83" mass="9549">MAFKREIQGVVVKIAGEKTASVLVERKVVHPRYRKIVKRFKKYLIHDERNEVKVGDTVVAVECRPLSKRKSFRLKSVLATGVE</sequence>
<gene>
    <name evidence="1" type="primary">rpsQ</name>
    <name type="ordered locus">CJJ81176_1695</name>
</gene>
<dbReference type="EMBL" id="CP000538">
    <property type="protein sequence ID" value="EAQ72740.1"/>
    <property type="molecule type" value="Genomic_DNA"/>
</dbReference>
<dbReference type="RefSeq" id="WP_002851549.1">
    <property type="nucleotide sequence ID" value="NC_008787.1"/>
</dbReference>
<dbReference type="SMR" id="A1W1V1"/>
<dbReference type="KEGG" id="cjj:CJJ81176_1695"/>
<dbReference type="eggNOG" id="COG0186">
    <property type="taxonomic scope" value="Bacteria"/>
</dbReference>
<dbReference type="HOGENOM" id="CLU_073626_1_1_7"/>
<dbReference type="Proteomes" id="UP000000646">
    <property type="component" value="Chromosome"/>
</dbReference>
<dbReference type="GO" id="GO:0022627">
    <property type="term" value="C:cytosolic small ribosomal subunit"/>
    <property type="evidence" value="ECO:0007669"/>
    <property type="project" value="TreeGrafter"/>
</dbReference>
<dbReference type="GO" id="GO:0019843">
    <property type="term" value="F:rRNA binding"/>
    <property type="evidence" value="ECO:0007669"/>
    <property type="project" value="UniProtKB-UniRule"/>
</dbReference>
<dbReference type="GO" id="GO:0003735">
    <property type="term" value="F:structural constituent of ribosome"/>
    <property type="evidence" value="ECO:0007669"/>
    <property type="project" value="InterPro"/>
</dbReference>
<dbReference type="GO" id="GO:0006412">
    <property type="term" value="P:translation"/>
    <property type="evidence" value="ECO:0007669"/>
    <property type="project" value="UniProtKB-UniRule"/>
</dbReference>
<dbReference type="CDD" id="cd00364">
    <property type="entry name" value="Ribosomal_uS17"/>
    <property type="match status" value="1"/>
</dbReference>
<dbReference type="Gene3D" id="2.40.50.140">
    <property type="entry name" value="Nucleic acid-binding proteins"/>
    <property type="match status" value="1"/>
</dbReference>
<dbReference type="HAMAP" id="MF_01345_B">
    <property type="entry name" value="Ribosomal_uS17_B"/>
    <property type="match status" value="1"/>
</dbReference>
<dbReference type="InterPro" id="IPR012340">
    <property type="entry name" value="NA-bd_OB-fold"/>
</dbReference>
<dbReference type="InterPro" id="IPR000266">
    <property type="entry name" value="Ribosomal_uS17"/>
</dbReference>
<dbReference type="InterPro" id="IPR019984">
    <property type="entry name" value="Ribosomal_uS17_bact/chlr"/>
</dbReference>
<dbReference type="InterPro" id="IPR019979">
    <property type="entry name" value="Ribosomal_uS17_CS"/>
</dbReference>
<dbReference type="NCBIfam" id="NF004123">
    <property type="entry name" value="PRK05610.1"/>
    <property type="match status" value="1"/>
</dbReference>
<dbReference type="NCBIfam" id="TIGR03635">
    <property type="entry name" value="uS17_bact"/>
    <property type="match status" value="1"/>
</dbReference>
<dbReference type="PANTHER" id="PTHR10744">
    <property type="entry name" value="40S RIBOSOMAL PROTEIN S11 FAMILY MEMBER"/>
    <property type="match status" value="1"/>
</dbReference>
<dbReference type="PANTHER" id="PTHR10744:SF1">
    <property type="entry name" value="SMALL RIBOSOMAL SUBUNIT PROTEIN US17M"/>
    <property type="match status" value="1"/>
</dbReference>
<dbReference type="Pfam" id="PF00366">
    <property type="entry name" value="Ribosomal_S17"/>
    <property type="match status" value="1"/>
</dbReference>
<dbReference type="PRINTS" id="PR00973">
    <property type="entry name" value="RIBOSOMALS17"/>
</dbReference>
<dbReference type="SUPFAM" id="SSF50249">
    <property type="entry name" value="Nucleic acid-binding proteins"/>
    <property type="match status" value="1"/>
</dbReference>
<dbReference type="PROSITE" id="PS00056">
    <property type="entry name" value="RIBOSOMAL_S17"/>
    <property type="match status" value="1"/>
</dbReference>
<reference key="1">
    <citation type="submission" date="2006-12" db="EMBL/GenBank/DDBJ databases">
        <authorList>
            <person name="Fouts D.E."/>
            <person name="Nelson K.E."/>
            <person name="Sebastian Y."/>
        </authorList>
    </citation>
    <scope>NUCLEOTIDE SEQUENCE [LARGE SCALE GENOMIC DNA]</scope>
    <source>
        <strain>81-176</strain>
    </source>
</reference>
<proteinExistence type="inferred from homology"/>
<name>RS17_CAMJJ</name>
<accession>A1W1V1</accession>
<comment type="function">
    <text evidence="1">One of the primary rRNA binding proteins, it binds specifically to the 5'-end of 16S ribosomal RNA.</text>
</comment>
<comment type="subunit">
    <text evidence="1">Part of the 30S ribosomal subunit.</text>
</comment>
<comment type="similarity">
    <text evidence="1">Belongs to the universal ribosomal protein uS17 family.</text>
</comment>
<protein>
    <recommendedName>
        <fullName evidence="1">Small ribosomal subunit protein uS17</fullName>
    </recommendedName>
    <alternativeName>
        <fullName evidence="2">30S ribosomal protein S17</fullName>
    </alternativeName>
</protein>
<organism>
    <name type="scientific">Campylobacter jejuni subsp. jejuni serotype O:23/36 (strain 81-176)</name>
    <dbReference type="NCBI Taxonomy" id="354242"/>
    <lineage>
        <taxon>Bacteria</taxon>
        <taxon>Pseudomonadati</taxon>
        <taxon>Campylobacterota</taxon>
        <taxon>Epsilonproteobacteria</taxon>
        <taxon>Campylobacterales</taxon>
        <taxon>Campylobacteraceae</taxon>
        <taxon>Campylobacter</taxon>
    </lineage>
</organism>